<feature type="chain" id="PRO_0000115602" description="Small ribosomal subunit protein uS15">
    <location>
        <begin position="1"/>
        <end position="152"/>
    </location>
</feature>
<feature type="region of interest" description="Disordered" evidence="2">
    <location>
        <begin position="1"/>
        <end position="21"/>
    </location>
</feature>
<feature type="compositionally biased region" description="Basic residues" evidence="2">
    <location>
        <begin position="1"/>
        <end position="16"/>
    </location>
</feature>
<organism>
    <name type="scientific">Archaeoglobus fulgidus (strain ATCC 49558 / DSM 4304 / JCM 9628 / NBRC 100126 / VC-16)</name>
    <dbReference type="NCBI Taxonomy" id="224325"/>
    <lineage>
        <taxon>Archaea</taxon>
        <taxon>Methanobacteriati</taxon>
        <taxon>Methanobacteriota</taxon>
        <taxon>Archaeoglobi</taxon>
        <taxon>Archaeoglobales</taxon>
        <taxon>Archaeoglobaceae</taxon>
        <taxon>Archaeoglobus</taxon>
    </lineage>
</organism>
<dbReference type="EMBL" id="AE000782">
    <property type="protein sequence ID" value="AAB90437.1"/>
    <property type="molecule type" value="Genomic_DNA"/>
</dbReference>
<dbReference type="PIR" id="A69350">
    <property type="entry name" value="A69350"/>
</dbReference>
<dbReference type="RefSeq" id="WP_010878304.1">
    <property type="nucleotide sequence ID" value="NC_000917.1"/>
</dbReference>
<dbReference type="SMR" id="O29457"/>
<dbReference type="STRING" id="224325.AF_0801"/>
<dbReference type="PaxDb" id="224325-AF_0801"/>
<dbReference type="EnsemblBacteria" id="AAB90437">
    <property type="protein sequence ID" value="AAB90437"/>
    <property type="gene ID" value="AF_0801"/>
</dbReference>
<dbReference type="KEGG" id="afu:AF_0801"/>
<dbReference type="eggNOG" id="arCOG04185">
    <property type="taxonomic scope" value="Archaea"/>
</dbReference>
<dbReference type="HOGENOM" id="CLU_090139_2_0_2"/>
<dbReference type="OrthoDB" id="6533at2157"/>
<dbReference type="PhylomeDB" id="O29457"/>
<dbReference type="Proteomes" id="UP000002199">
    <property type="component" value="Chromosome"/>
</dbReference>
<dbReference type="GO" id="GO:0022627">
    <property type="term" value="C:cytosolic small ribosomal subunit"/>
    <property type="evidence" value="ECO:0007669"/>
    <property type="project" value="TreeGrafter"/>
</dbReference>
<dbReference type="GO" id="GO:0070181">
    <property type="term" value="F:small ribosomal subunit rRNA binding"/>
    <property type="evidence" value="ECO:0007669"/>
    <property type="project" value="TreeGrafter"/>
</dbReference>
<dbReference type="GO" id="GO:0003735">
    <property type="term" value="F:structural constituent of ribosome"/>
    <property type="evidence" value="ECO:0007669"/>
    <property type="project" value="InterPro"/>
</dbReference>
<dbReference type="GO" id="GO:0006412">
    <property type="term" value="P:translation"/>
    <property type="evidence" value="ECO:0007669"/>
    <property type="project" value="UniProtKB-UniRule"/>
</dbReference>
<dbReference type="CDD" id="cd00353">
    <property type="entry name" value="Ribosomal_S15p_S13e"/>
    <property type="match status" value="1"/>
</dbReference>
<dbReference type="FunFam" id="1.10.287.10:FF:000003">
    <property type="entry name" value="40S ribosomal protein S13"/>
    <property type="match status" value="1"/>
</dbReference>
<dbReference type="Gene3D" id="4.10.860.130">
    <property type="match status" value="1"/>
</dbReference>
<dbReference type="Gene3D" id="1.10.287.10">
    <property type="entry name" value="S15/NS1, RNA-binding"/>
    <property type="match status" value="1"/>
</dbReference>
<dbReference type="HAMAP" id="MF_01343_A">
    <property type="entry name" value="Ribosomal_uS15_A"/>
    <property type="match status" value="1"/>
</dbReference>
<dbReference type="InterPro" id="IPR000589">
    <property type="entry name" value="Ribosomal_uS15"/>
</dbReference>
<dbReference type="InterPro" id="IPR023029">
    <property type="entry name" value="Ribosomal_uS15_arc_euk"/>
</dbReference>
<dbReference type="InterPro" id="IPR012606">
    <property type="entry name" value="Ribosomal_uS15_N"/>
</dbReference>
<dbReference type="InterPro" id="IPR009068">
    <property type="entry name" value="uS15_NS1_RNA-bd_sf"/>
</dbReference>
<dbReference type="NCBIfam" id="NF006331">
    <property type="entry name" value="PRK08561.1"/>
    <property type="match status" value="1"/>
</dbReference>
<dbReference type="PANTHER" id="PTHR11885">
    <property type="entry name" value="RIBOSOMAL PROTEIN S15P/S13E"/>
    <property type="match status" value="1"/>
</dbReference>
<dbReference type="PANTHER" id="PTHR11885:SF6">
    <property type="entry name" value="SMALL RIBOSOMAL SUBUNIT PROTEIN US15"/>
    <property type="match status" value="1"/>
</dbReference>
<dbReference type="Pfam" id="PF08069">
    <property type="entry name" value="Ribosomal_S13_N"/>
    <property type="match status" value="1"/>
</dbReference>
<dbReference type="Pfam" id="PF00312">
    <property type="entry name" value="Ribosomal_S15"/>
    <property type="match status" value="1"/>
</dbReference>
<dbReference type="SMART" id="SM01386">
    <property type="entry name" value="Ribosomal_S13_N"/>
    <property type="match status" value="1"/>
</dbReference>
<dbReference type="SMART" id="SM01387">
    <property type="entry name" value="Ribosomal_S15"/>
    <property type="match status" value="1"/>
</dbReference>
<dbReference type="SUPFAM" id="SSF47060">
    <property type="entry name" value="S15/NS1 RNA-binding domain"/>
    <property type="match status" value="1"/>
</dbReference>
<dbReference type="PROSITE" id="PS00362">
    <property type="entry name" value="RIBOSOMAL_S15"/>
    <property type="match status" value="1"/>
</dbReference>
<name>RS15_ARCFU</name>
<evidence type="ECO:0000255" key="1">
    <source>
        <dbReference type="HAMAP-Rule" id="MF_01343"/>
    </source>
</evidence>
<evidence type="ECO:0000256" key="2">
    <source>
        <dbReference type="SAM" id="MobiDB-lite"/>
    </source>
</evidence>
<evidence type="ECO:0000305" key="3"/>
<protein>
    <recommendedName>
        <fullName evidence="1">Small ribosomal subunit protein uS15</fullName>
    </recommendedName>
    <alternativeName>
        <fullName evidence="3">30S ribosomal protein S15</fullName>
    </alternativeName>
</protein>
<keyword id="KW-1185">Reference proteome</keyword>
<keyword id="KW-0687">Ribonucleoprotein</keyword>
<keyword id="KW-0689">Ribosomal protein</keyword>
<sequence>MARIHARRRGKSGSKRIYRDSPPEWVDMSPEEVEKKVLELYNEGYEPSMIGMILRDRYGIPSVKQVTGKKIQKILKEHGVEIKYPEDLKALIKKALKLRAHLEVHRKDKHNRRGLQLIEAKIWRLSSYYKEKGVLPADWKYNPDRLKIEISK</sequence>
<gene>
    <name evidence="1" type="primary">rps15</name>
    <name type="ordered locus">AF_0801</name>
</gene>
<proteinExistence type="inferred from homology"/>
<reference key="1">
    <citation type="journal article" date="1997" name="Nature">
        <title>The complete genome sequence of the hyperthermophilic, sulphate-reducing archaeon Archaeoglobus fulgidus.</title>
        <authorList>
            <person name="Klenk H.-P."/>
            <person name="Clayton R.A."/>
            <person name="Tomb J.-F."/>
            <person name="White O."/>
            <person name="Nelson K.E."/>
            <person name="Ketchum K.A."/>
            <person name="Dodson R.J."/>
            <person name="Gwinn M.L."/>
            <person name="Hickey E.K."/>
            <person name="Peterson J.D."/>
            <person name="Richardson D.L."/>
            <person name="Kerlavage A.R."/>
            <person name="Graham D.E."/>
            <person name="Kyrpides N.C."/>
            <person name="Fleischmann R.D."/>
            <person name="Quackenbush J."/>
            <person name="Lee N.H."/>
            <person name="Sutton G.G."/>
            <person name="Gill S.R."/>
            <person name="Kirkness E.F."/>
            <person name="Dougherty B.A."/>
            <person name="McKenney K."/>
            <person name="Adams M.D."/>
            <person name="Loftus B.J."/>
            <person name="Peterson S.N."/>
            <person name="Reich C.I."/>
            <person name="McNeil L.K."/>
            <person name="Badger J.H."/>
            <person name="Glodek A."/>
            <person name="Zhou L."/>
            <person name="Overbeek R."/>
            <person name="Gocayne J.D."/>
            <person name="Weidman J.F."/>
            <person name="McDonald L.A."/>
            <person name="Utterback T.R."/>
            <person name="Cotton M.D."/>
            <person name="Spriggs T."/>
            <person name="Artiach P."/>
            <person name="Kaine B.P."/>
            <person name="Sykes S.M."/>
            <person name="Sadow P.W."/>
            <person name="D'Andrea K.P."/>
            <person name="Bowman C."/>
            <person name="Fujii C."/>
            <person name="Garland S.A."/>
            <person name="Mason T.M."/>
            <person name="Olsen G.J."/>
            <person name="Fraser C.M."/>
            <person name="Smith H.O."/>
            <person name="Woese C.R."/>
            <person name="Venter J.C."/>
        </authorList>
    </citation>
    <scope>NUCLEOTIDE SEQUENCE [LARGE SCALE GENOMIC DNA]</scope>
    <source>
        <strain>ATCC 49558 / DSM 4304 / JCM 9628 / NBRC 100126 / VC-16</strain>
    </source>
</reference>
<comment type="subunit">
    <text evidence="1">Part of the 30S ribosomal subunit.</text>
</comment>
<comment type="similarity">
    <text evidence="1">Belongs to the universal ribosomal protein uS15 family.</text>
</comment>
<accession>O29457</accession>